<feature type="chain" id="PRO_0000068248" description="Casein kinase II subunit beta-1">
    <location>
        <begin position="1"/>
        <end position="287"/>
    </location>
</feature>
<feature type="region of interest" description="Disordered" evidence="2">
    <location>
        <begin position="1"/>
        <end position="97"/>
    </location>
</feature>
<feature type="compositionally biased region" description="Basic and acidic residues" evidence="2">
    <location>
        <begin position="13"/>
        <end position="25"/>
    </location>
</feature>
<feature type="compositionally biased region" description="Low complexity" evidence="2">
    <location>
        <begin position="41"/>
        <end position="50"/>
    </location>
</feature>
<feature type="compositionally biased region" description="Acidic residues" evidence="2">
    <location>
        <begin position="78"/>
        <end position="97"/>
    </location>
</feature>
<name>CSK2B_ARATH</name>
<dbReference type="EMBL" id="L22563">
    <property type="protein sequence ID" value="AAA53233.1"/>
    <property type="molecule type" value="mRNA"/>
</dbReference>
<dbReference type="EMBL" id="AB025609">
    <property type="protein sequence ID" value="BAA98103.1"/>
    <property type="molecule type" value="Genomic_DNA"/>
</dbReference>
<dbReference type="EMBL" id="CP002688">
    <property type="protein sequence ID" value="AED95466.1"/>
    <property type="molecule type" value="Genomic_DNA"/>
</dbReference>
<dbReference type="PIR" id="S47967">
    <property type="entry name" value="S47967"/>
</dbReference>
<dbReference type="RefSeq" id="NP_199519.1">
    <molecule id="P40228-1"/>
    <property type="nucleotide sequence ID" value="NM_124079.4"/>
</dbReference>
<dbReference type="SMR" id="P40228"/>
<dbReference type="BioGRID" id="20002">
    <property type="interactions" value="2"/>
</dbReference>
<dbReference type="FunCoup" id="P40228">
    <property type="interactions" value="4451"/>
</dbReference>
<dbReference type="IntAct" id="P40228">
    <property type="interactions" value="2"/>
</dbReference>
<dbReference type="STRING" id="3702.P40228"/>
<dbReference type="PaxDb" id="3702-AT5G47080.1"/>
<dbReference type="ProteomicsDB" id="222655">
    <molecule id="P40228-1"/>
</dbReference>
<dbReference type="EnsemblPlants" id="AT5G47080.1">
    <molecule id="P40228-1"/>
    <property type="protein sequence ID" value="AT5G47080.1"/>
    <property type="gene ID" value="AT5G47080"/>
</dbReference>
<dbReference type="GeneID" id="834754"/>
<dbReference type="Gramene" id="AT5G47080.1">
    <molecule id="P40228-1"/>
    <property type="protein sequence ID" value="AT5G47080.1"/>
    <property type="gene ID" value="AT5G47080"/>
</dbReference>
<dbReference type="KEGG" id="ath:AT5G47080"/>
<dbReference type="Araport" id="AT5G47080"/>
<dbReference type="TAIR" id="AT5G47080">
    <property type="gene designation" value="CKB1"/>
</dbReference>
<dbReference type="eggNOG" id="KOG3092">
    <property type="taxonomic scope" value="Eukaryota"/>
</dbReference>
<dbReference type="InParanoid" id="P40228"/>
<dbReference type="OMA" id="FGFSVYH"/>
<dbReference type="OrthoDB" id="3971593at2759"/>
<dbReference type="PhylomeDB" id="P40228"/>
<dbReference type="PRO" id="PR:P40228"/>
<dbReference type="Proteomes" id="UP000006548">
    <property type="component" value="Chromosome 5"/>
</dbReference>
<dbReference type="ExpressionAtlas" id="P40228">
    <property type="expression patterns" value="baseline and differential"/>
</dbReference>
<dbReference type="GO" id="GO:0005829">
    <property type="term" value="C:cytosol"/>
    <property type="evidence" value="ECO:0000314"/>
    <property type="project" value="UniProtKB"/>
</dbReference>
<dbReference type="GO" id="GO:0005634">
    <property type="term" value="C:nucleus"/>
    <property type="evidence" value="ECO:0000314"/>
    <property type="project" value="UniProtKB"/>
</dbReference>
<dbReference type="GO" id="GO:0005956">
    <property type="term" value="C:protein kinase CK2 complex"/>
    <property type="evidence" value="ECO:0000314"/>
    <property type="project" value="TAIR"/>
</dbReference>
<dbReference type="GO" id="GO:0019887">
    <property type="term" value="F:protein kinase regulator activity"/>
    <property type="evidence" value="ECO:0000314"/>
    <property type="project" value="TAIR"/>
</dbReference>
<dbReference type="GO" id="GO:0006468">
    <property type="term" value="P:protein phosphorylation"/>
    <property type="evidence" value="ECO:0000314"/>
    <property type="project" value="TAIR"/>
</dbReference>
<dbReference type="GO" id="GO:0071900">
    <property type="term" value="P:regulation of protein serine/threonine kinase activity"/>
    <property type="evidence" value="ECO:0000314"/>
    <property type="project" value="TAIR"/>
</dbReference>
<dbReference type="FunFam" id="1.10.1820.10:FF:000002">
    <property type="entry name" value="Casein kinase II subunit beta"/>
    <property type="match status" value="1"/>
</dbReference>
<dbReference type="FunFam" id="2.20.25.20:FF:000003">
    <property type="entry name" value="Casein kinase II subunit beta"/>
    <property type="match status" value="1"/>
</dbReference>
<dbReference type="Gene3D" id="2.20.25.20">
    <property type="match status" value="1"/>
</dbReference>
<dbReference type="Gene3D" id="1.10.1820.10">
    <property type="entry name" value="protein kinase ck2 holoenzyme, chain C, domain 1"/>
    <property type="match status" value="1"/>
</dbReference>
<dbReference type="InterPro" id="IPR016149">
    <property type="entry name" value="Casein_kin_II_reg-sub_N"/>
</dbReference>
<dbReference type="InterPro" id="IPR035991">
    <property type="entry name" value="Casein_kinase_II_beta-like"/>
</dbReference>
<dbReference type="InterPro" id="IPR000704">
    <property type="entry name" value="Casein_kinase_II_reg-sub"/>
</dbReference>
<dbReference type="PANTHER" id="PTHR11740">
    <property type="entry name" value="CASEIN KINASE II SUBUNIT BETA"/>
    <property type="match status" value="1"/>
</dbReference>
<dbReference type="PANTHER" id="PTHR11740:SF0">
    <property type="entry name" value="CASEIN KINASE II SUBUNIT BETA"/>
    <property type="match status" value="1"/>
</dbReference>
<dbReference type="Pfam" id="PF01214">
    <property type="entry name" value="CK_II_beta"/>
    <property type="match status" value="1"/>
</dbReference>
<dbReference type="PRINTS" id="PR00472">
    <property type="entry name" value="CASNKINASEII"/>
</dbReference>
<dbReference type="SMART" id="SM01085">
    <property type="entry name" value="CK_II_beta"/>
    <property type="match status" value="1"/>
</dbReference>
<dbReference type="SUPFAM" id="SSF57798">
    <property type="entry name" value="Casein kinase II beta subunit"/>
    <property type="match status" value="1"/>
</dbReference>
<dbReference type="PROSITE" id="PS01101">
    <property type="entry name" value="CK2_BETA"/>
    <property type="match status" value="1"/>
</dbReference>
<accession>P40228</accession>
<reference key="1">
    <citation type="journal article" date="1994" name="Plant Mol. Biol.">
        <title>Isolation of an Arabidopsis thaliana casein kinase II beta subunit by complementation in Saccharomyces cerevisiae.</title>
        <authorList>
            <person name="Collinge M.A."/>
            <person name="Walker J.C."/>
        </authorList>
    </citation>
    <scope>NUCLEOTIDE SEQUENCE [MRNA]</scope>
</reference>
<reference key="2">
    <citation type="submission" date="1999-04" db="EMBL/GenBank/DDBJ databases">
        <title>Structural analysis of Arabidopsis thaliana chromosome 5. XI.</title>
        <authorList>
            <person name="Kaneko T."/>
            <person name="Katoh T."/>
            <person name="Asamizu E."/>
            <person name="Sato S."/>
            <person name="Nakamura Y."/>
            <person name="Kotani H."/>
            <person name="Tabata S."/>
        </authorList>
    </citation>
    <scope>NUCLEOTIDE SEQUENCE [LARGE SCALE GENOMIC DNA]</scope>
    <source>
        <strain>cv. Columbia</strain>
    </source>
</reference>
<reference key="3">
    <citation type="journal article" date="2017" name="Plant J.">
        <title>Araport11: a complete reannotation of the Arabidopsis thaliana reference genome.</title>
        <authorList>
            <person name="Cheng C.Y."/>
            <person name="Krishnakumar V."/>
            <person name="Chan A.P."/>
            <person name="Thibaud-Nissen F."/>
            <person name="Schobel S."/>
            <person name="Town C.D."/>
        </authorList>
    </citation>
    <scope>GENOME REANNOTATION</scope>
    <source>
        <strain>cv. Columbia</strain>
    </source>
</reference>
<reference key="4">
    <citation type="journal article" date="1995" name="Plant Cell">
        <title>Reconstitution of Arabidopsis casein kinase II from recombinant subunits and phosphorylation of transcription factor GBF1.</title>
        <authorList>
            <person name="Klimczak L.J."/>
            <person name="Collinge M.A."/>
            <person name="Farini D."/>
            <person name="Giuliano G."/>
            <person name="Walker J.C."/>
            <person name="Cashmore A.R."/>
        </authorList>
    </citation>
    <scope>FUNCTION</scope>
    <scope>SUBUNIT</scope>
</reference>
<reference key="5">
    <citation type="journal article" date="1998" name="Proc. Natl. Acad. Sci. U.S.A.">
        <title>Protein kinase CK2 interacts with and phosphorylates the Arabidopsis circadian clock-associated 1 protein.</title>
        <authorList>
            <person name="Sugano S."/>
            <person name="Andronis C."/>
            <person name="Green R.M."/>
            <person name="Wang Z.-Y."/>
            <person name="Tobin E.M."/>
        </authorList>
    </citation>
    <scope>INTERACTION WITH CCA1</scope>
</reference>
<reference key="6">
    <citation type="journal article" date="1999" name="Proc. Natl. Acad. Sci. U.S.A.">
        <title>The protein kinase CK2 is involved in regulation of circadian rhythms in Arabidopsis.</title>
        <authorList>
            <person name="Sugano S."/>
            <person name="Andronis C."/>
            <person name="Ong M.S."/>
            <person name="Green R.M."/>
            <person name="Tobin E.M."/>
        </authorList>
    </citation>
    <scope>INTERACTION WITH LHY</scope>
</reference>
<reference key="7">
    <citation type="journal article" date="2006" name="Plant Cell Physiol.">
        <title>An extensive survey of CK2 alpha and beta subunits in Arabidopsis: multiple isoforms exhibit differential subcellular localization.</title>
        <authorList>
            <person name="Salinas P."/>
            <person name="Fuentes D."/>
            <person name="Vidal E."/>
            <person name="Jordana X."/>
            <person name="Echeverria M."/>
            <person name="Holuigue L."/>
        </authorList>
    </citation>
    <scope>SUBCELLULAR LOCATION</scope>
</reference>
<reference key="8">
    <citation type="journal article" date="2009" name="J. Biol. Chem.">
        <title>Differential phosphorylation of plant translation initiation factors by Arabidopsis thaliana CK2 holoenzymes.</title>
        <authorList>
            <person name="Dennis M.D."/>
            <person name="Browning K.S."/>
        </authorList>
    </citation>
    <scope>FUNCTION</scope>
    <scope>SUBUNIT</scope>
</reference>
<reference key="9">
    <citation type="journal article" date="2009" name="J. Biol. Chem.">
        <title>Phosphorylation of plant translation initiation factors by CK2 enhances the in vitro interaction of multifactor complex components.</title>
        <authorList>
            <person name="Dennis M.D."/>
            <person name="Person M.D."/>
            <person name="Browning K.S."/>
        </authorList>
    </citation>
    <scope>FUNCTION</scope>
</reference>
<reference key="10">
    <citation type="journal article" date="2011" name="J. Biol. Chem.">
        <title>Phosphorylation by CK2 enhances the rapid light-induced degradation of phytochrome interacting factor 1 in Arabidopsis.</title>
        <authorList>
            <person name="Bu Q."/>
            <person name="Zhu L."/>
            <person name="Dennis M.D."/>
            <person name="Yu L."/>
            <person name="Lu S.X."/>
            <person name="Person M.D."/>
            <person name="Tobin E.M."/>
            <person name="Browning K.S."/>
            <person name="Huq E."/>
        </authorList>
    </citation>
    <scope>FUNCTION</scope>
</reference>
<keyword id="KW-0025">Alternative splicing</keyword>
<keyword id="KW-0963">Cytoplasm</keyword>
<keyword id="KW-0539">Nucleus</keyword>
<keyword id="KW-0597">Phosphoprotein</keyword>
<keyword id="KW-1185">Reference proteome</keyword>
<proteinExistence type="evidence at protein level"/>
<comment type="function">
    <text evidence="5 6 7 8 11">Plays a complex role in regulating the basal catalytic activity of the alpha subunit. The tetrameric holoenzyme CK2, composed of two alpha and two beta subunits, phosphorylates the transcription factor GBFl, resulting in stimulation of its DNA binding activity (PubMed:7696877). CK2 phosphorylates the transcription factor PIF1 after an exposure to light, resulting in a proteasome-dependent degradation of PIF1 and promotion of photomorphogenesis (PubMed:21330376). CK2 phosphorylates translation initiation factors. May participate in the regulation of the initiation of translation (PubMed:19509278, PubMed:19509420). Stimulates the binding of CCA1 to promoters (Probable).</text>
</comment>
<comment type="subunit">
    <text evidence="3 5 8 9">Heterotetramer of two catalytic alpha subunits and two regulatory beta subunits (PubMed:19509278, PubMed:7696877). Interacts with CCA1 (PubMed:9724822). Interacts with LHY (PubMed:10535927).</text>
</comment>
<comment type="interaction">
    <interactant intactId="EBI-1644917">
        <id>P40228</id>
    </interactant>
    <interactant intactId="EBI-1644880">
        <id>P92973</id>
        <label>CCA1</label>
    </interactant>
    <organismsDiffer>false</organismsDiffer>
    <experiments>3</experiments>
</comment>
<comment type="subcellular location">
    <subcellularLocation>
        <location evidence="4">Cytoplasm</location>
        <location evidence="4">Cytosol</location>
    </subcellularLocation>
    <subcellularLocation>
        <location evidence="4">Nucleus</location>
    </subcellularLocation>
</comment>
<comment type="alternative products">
    <event type="alternative splicing"/>
    <isoform>
        <id>P40228-1</id>
        <name>1</name>
        <sequence type="displayed"/>
    </isoform>
    <text>A number of isoforms are produced. According to EST sequences.</text>
</comment>
<comment type="PTM">
    <text evidence="1">Phosphorylated by alpha subunit.</text>
</comment>
<comment type="similarity">
    <text evidence="10">Belongs to the casein kinase 2 subunit beta family.</text>
</comment>
<gene>
    <name type="primary">CKB1</name>
    <name type="ordered locus">At5g47080</name>
    <name type="ORF">K14A3.3</name>
</gene>
<sequence length="287" mass="32355">MYRDRGTVNSRPEVVDRKRINDALERPSPSTSRQVNGKGKGTVTAATTTANLIGKQQSNNINHRDSRSASLSKNNTVSDDESDTDSEESDVSGSDGEDTSWISWFCNLRGNEFFCEVDDDYIQDDFNLCGLSSLVPYYEYALDLILDVESSQGEMFTEEQNELIESAAEMLYGLIHARYILTSKGLAAMLDKYKNYDFGRCPRVYCCGQPCLPVGQSDLPRSSTVKIYCPKCEDIYYPRSKYQGNIDGAYFGTTFPHLFLMTYGHLKPAKATQNYVQRVFGFKLHKP</sequence>
<organism>
    <name type="scientific">Arabidopsis thaliana</name>
    <name type="common">Mouse-ear cress</name>
    <dbReference type="NCBI Taxonomy" id="3702"/>
    <lineage>
        <taxon>Eukaryota</taxon>
        <taxon>Viridiplantae</taxon>
        <taxon>Streptophyta</taxon>
        <taxon>Embryophyta</taxon>
        <taxon>Tracheophyta</taxon>
        <taxon>Spermatophyta</taxon>
        <taxon>Magnoliopsida</taxon>
        <taxon>eudicotyledons</taxon>
        <taxon>Gunneridae</taxon>
        <taxon>Pentapetalae</taxon>
        <taxon>rosids</taxon>
        <taxon>malvids</taxon>
        <taxon>Brassicales</taxon>
        <taxon>Brassicaceae</taxon>
        <taxon>Camelineae</taxon>
        <taxon>Arabidopsis</taxon>
    </lineage>
</organism>
<protein>
    <recommendedName>
        <fullName evidence="10">Casein kinase II subunit beta-1</fullName>
        <shortName evidence="10">CK II beta-1</shortName>
    </recommendedName>
</protein>
<evidence type="ECO:0000250" key="1"/>
<evidence type="ECO:0000256" key="2">
    <source>
        <dbReference type="SAM" id="MobiDB-lite"/>
    </source>
</evidence>
<evidence type="ECO:0000269" key="3">
    <source>
    </source>
</evidence>
<evidence type="ECO:0000269" key="4">
    <source>
    </source>
</evidence>
<evidence type="ECO:0000269" key="5">
    <source>
    </source>
</evidence>
<evidence type="ECO:0000269" key="6">
    <source>
    </source>
</evidence>
<evidence type="ECO:0000269" key="7">
    <source>
    </source>
</evidence>
<evidence type="ECO:0000269" key="8">
    <source>
    </source>
</evidence>
<evidence type="ECO:0000269" key="9">
    <source>
    </source>
</evidence>
<evidence type="ECO:0000305" key="10"/>
<evidence type="ECO:0000305" key="11">
    <source>
    </source>
</evidence>